<organism>
    <name type="scientific">Mycobacterium sp. (strain JLS)</name>
    <dbReference type="NCBI Taxonomy" id="164757"/>
    <lineage>
        <taxon>Bacteria</taxon>
        <taxon>Bacillati</taxon>
        <taxon>Actinomycetota</taxon>
        <taxon>Actinomycetes</taxon>
        <taxon>Mycobacteriales</taxon>
        <taxon>Mycobacteriaceae</taxon>
        <taxon>Mycobacterium</taxon>
    </lineage>
</organism>
<sequence length="316" mass="33677">MTRHLLTAADLSRDEATAILDDADRFSQALLGREVKKLPTLRGRTVITMFYENSTRTRVSFEVAGKWMSADVINVSASGSSVAKGESLRDTALTLRAAGADALIIRHPASGAAQQLAEWTAAEAGAPSVINAGDGTHEHPTQALLDALTLRQRLGGIEGRRVVIVGDVLHSRVARSNVLLLHTLGAEVVLVAPPTLLPVGVRQWPVTVSHDLDAELPAADAVLMLRVQAERMNGGFFPSAREYSVRYGLSDKRQALLPDSAVVLHPGPMLRGMEISSSVADSSQSAVLQQVSNGVHVRMAVLFHLLVGAEQEAISA</sequence>
<keyword id="KW-0665">Pyrimidine biosynthesis</keyword>
<keyword id="KW-0808">Transferase</keyword>
<dbReference type="EC" id="2.1.3.2" evidence="1"/>
<dbReference type="EMBL" id="CP000580">
    <property type="protein sequence ID" value="ABN98188.1"/>
    <property type="molecule type" value="Genomic_DNA"/>
</dbReference>
<dbReference type="SMR" id="A3PZ61"/>
<dbReference type="KEGG" id="mjl:Mjls_2404"/>
<dbReference type="HOGENOM" id="CLU_043846_2_0_11"/>
<dbReference type="BioCyc" id="MSP164757:G1G8C-2423-MONOMER"/>
<dbReference type="UniPathway" id="UPA00070">
    <property type="reaction ID" value="UER00116"/>
</dbReference>
<dbReference type="GO" id="GO:0005829">
    <property type="term" value="C:cytosol"/>
    <property type="evidence" value="ECO:0007669"/>
    <property type="project" value="TreeGrafter"/>
</dbReference>
<dbReference type="GO" id="GO:0016597">
    <property type="term" value="F:amino acid binding"/>
    <property type="evidence" value="ECO:0007669"/>
    <property type="project" value="InterPro"/>
</dbReference>
<dbReference type="GO" id="GO:0004070">
    <property type="term" value="F:aspartate carbamoyltransferase activity"/>
    <property type="evidence" value="ECO:0007669"/>
    <property type="project" value="UniProtKB-UniRule"/>
</dbReference>
<dbReference type="GO" id="GO:0006207">
    <property type="term" value="P:'de novo' pyrimidine nucleobase biosynthetic process"/>
    <property type="evidence" value="ECO:0007669"/>
    <property type="project" value="InterPro"/>
</dbReference>
<dbReference type="GO" id="GO:0044205">
    <property type="term" value="P:'de novo' UMP biosynthetic process"/>
    <property type="evidence" value="ECO:0007669"/>
    <property type="project" value="UniProtKB-UniRule"/>
</dbReference>
<dbReference type="GO" id="GO:0006520">
    <property type="term" value="P:amino acid metabolic process"/>
    <property type="evidence" value="ECO:0007669"/>
    <property type="project" value="InterPro"/>
</dbReference>
<dbReference type="FunFam" id="3.40.50.1370:FF:000007">
    <property type="entry name" value="Aspartate carbamoyltransferase"/>
    <property type="match status" value="1"/>
</dbReference>
<dbReference type="Gene3D" id="3.40.50.1370">
    <property type="entry name" value="Aspartate/ornithine carbamoyltransferase"/>
    <property type="match status" value="2"/>
</dbReference>
<dbReference type="HAMAP" id="MF_00001">
    <property type="entry name" value="Asp_carb_tr"/>
    <property type="match status" value="1"/>
</dbReference>
<dbReference type="InterPro" id="IPR006132">
    <property type="entry name" value="Asp/Orn_carbamoyltranf_P-bd"/>
</dbReference>
<dbReference type="InterPro" id="IPR006130">
    <property type="entry name" value="Asp/Orn_carbamoylTrfase"/>
</dbReference>
<dbReference type="InterPro" id="IPR036901">
    <property type="entry name" value="Asp/Orn_carbamoylTrfase_sf"/>
</dbReference>
<dbReference type="InterPro" id="IPR002082">
    <property type="entry name" value="Asp_carbamoyltransf"/>
</dbReference>
<dbReference type="InterPro" id="IPR006131">
    <property type="entry name" value="Asp_carbamoyltransf_Asp/Orn-bd"/>
</dbReference>
<dbReference type="NCBIfam" id="TIGR00670">
    <property type="entry name" value="asp_carb_tr"/>
    <property type="match status" value="1"/>
</dbReference>
<dbReference type="NCBIfam" id="NF002032">
    <property type="entry name" value="PRK00856.1"/>
    <property type="match status" value="1"/>
</dbReference>
<dbReference type="PANTHER" id="PTHR45753:SF6">
    <property type="entry name" value="ASPARTATE CARBAMOYLTRANSFERASE"/>
    <property type="match status" value="1"/>
</dbReference>
<dbReference type="PANTHER" id="PTHR45753">
    <property type="entry name" value="ORNITHINE CARBAMOYLTRANSFERASE, MITOCHONDRIAL"/>
    <property type="match status" value="1"/>
</dbReference>
<dbReference type="Pfam" id="PF00185">
    <property type="entry name" value="OTCace"/>
    <property type="match status" value="1"/>
</dbReference>
<dbReference type="Pfam" id="PF02729">
    <property type="entry name" value="OTCace_N"/>
    <property type="match status" value="1"/>
</dbReference>
<dbReference type="PRINTS" id="PR00100">
    <property type="entry name" value="AOTCASE"/>
</dbReference>
<dbReference type="PRINTS" id="PR00101">
    <property type="entry name" value="ATCASE"/>
</dbReference>
<dbReference type="SUPFAM" id="SSF53671">
    <property type="entry name" value="Aspartate/ornithine carbamoyltransferase"/>
    <property type="match status" value="1"/>
</dbReference>
<dbReference type="PROSITE" id="PS00097">
    <property type="entry name" value="CARBAMOYLTRANSFERASE"/>
    <property type="match status" value="1"/>
</dbReference>
<gene>
    <name evidence="1" type="primary">pyrB</name>
    <name type="ordered locus">Mjls_2404</name>
</gene>
<proteinExistence type="inferred from homology"/>
<comment type="function">
    <text evidence="1">Catalyzes the condensation of carbamoyl phosphate and aspartate to form carbamoyl aspartate and inorganic phosphate, the committed step in the de novo pyrimidine nucleotide biosynthesis pathway.</text>
</comment>
<comment type="catalytic activity">
    <reaction evidence="1">
        <text>carbamoyl phosphate + L-aspartate = N-carbamoyl-L-aspartate + phosphate + H(+)</text>
        <dbReference type="Rhea" id="RHEA:20013"/>
        <dbReference type="ChEBI" id="CHEBI:15378"/>
        <dbReference type="ChEBI" id="CHEBI:29991"/>
        <dbReference type="ChEBI" id="CHEBI:32814"/>
        <dbReference type="ChEBI" id="CHEBI:43474"/>
        <dbReference type="ChEBI" id="CHEBI:58228"/>
        <dbReference type="EC" id="2.1.3.2"/>
    </reaction>
</comment>
<comment type="pathway">
    <text evidence="1">Pyrimidine metabolism; UMP biosynthesis via de novo pathway; (S)-dihydroorotate from bicarbonate: step 2/3.</text>
</comment>
<comment type="subunit">
    <text evidence="1">Heterododecamer (2C3:3R2) of six catalytic PyrB chains organized as two trimers (C3), and six regulatory PyrI chains organized as three dimers (R2).</text>
</comment>
<comment type="similarity">
    <text evidence="1">Belongs to the aspartate/ornithine carbamoyltransferase superfamily. ATCase family.</text>
</comment>
<name>PYRB_MYCSJ</name>
<feature type="chain" id="PRO_0000321120" description="Aspartate carbamoyltransferase catalytic subunit">
    <location>
        <begin position="1"/>
        <end position="316"/>
    </location>
</feature>
<feature type="binding site" evidence="1">
    <location>
        <position position="56"/>
    </location>
    <ligand>
        <name>carbamoyl phosphate</name>
        <dbReference type="ChEBI" id="CHEBI:58228"/>
    </ligand>
</feature>
<feature type="binding site" evidence="1">
    <location>
        <position position="57"/>
    </location>
    <ligand>
        <name>carbamoyl phosphate</name>
        <dbReference type="ChEBI" id="CHEBI:58228"/>
    </ligand>
</feature>
<feature type="binding site" evidence="1">
    <location>
        <position position="84"/>
    </location>
    <ligand>
        <name>L-aspartate</name>
        <dbReference type="ChEBI" id="CHEBI:29991"/>
    </ligand>
</feature>
<feature type="binding site" evidence="1">
    <location>
        <position position="106"/>
    </location>
    <ligand>
        <name>carbamoyl phosphate</name>
        <dbReference type="ChEBI" id="CHEBI:58228"/>
    </ligand>
</feature>
<feature type="binding site" evidence="1">
    <location>
        <position position="139"/>
    </location>
    <ligand>
        <name>carbamoyl phosphate</name>
        <dbReference type="ChEBI" id="CHEBI:58228"/>
    </ligand>
</feature>
<feature type="binding site" evidence="1">
    <location>
        <position position="142"/>
    </location>
    <ligand>
        <name>carbamoyl phosphate</name>
        <dbReference type="ChEBI" id="CHEBI:58228"/>
    </ligand>
</feature>
<feature type="binding site" evidence="1">
    <location>
        <position position="172"/>
    </location>
    <ligand>
        <name>L-aspartate</name>
        <dbReference type="ChEBI" id="CHEBI:29991"/>
    </ligand>
</feature>
<feature type="binding site" evidence="1">
    <location>
        <position position="226"/>
    </location>
    <ligand>
        <name>L-aspartate</name>
        <dbReference type="ChEBI" id="CHEBI:29991"/>
    </ligand>
</feature>
<feature type="binding site" evidence="1">
    <location>
        <position position="267"/>
    </location>
    <ligand>
        <name>carbamoyl phosphate</name>
        <dbReference type="ChEBI" id="CHEBI:58228"/>
    </ligand>
</feature>
<feature type="binding site" evidence="1">
    <location>
        <position position="268"/>
    </location>
    <ligand>
        <name>carbamoyl phosphate</name>
        <dbReference type="ChEBI" id="CHEBI:58228"/>
    </ligand>
</feature>
<evidence type="ECO:0000255" key="1">
    <source>
        <dbReference type="HAMAP-Rule" id="MF_00001"/>
    </source>
</evidence>
<protein>
    <recommendedName>
        <fullName evidence="1">Aspartate carbamoyltransferase catalytic subunit</fullName>
        <ecNumber evidence="1">2.1.3.2</ecNumber>
    </recommendedName>
    <alternativeName>
        <fullName evidence="1">Aspartate transcarbamylase</fullName>
        <shortName evidence="1">ATCase</shortName>
    </alternativeName>
</protein>
<accession>A3PZ61</accession>
<reference key="1">
    <citation type="submission" date="2007-02" db="EMBL/GenBank/DDBJ databases">
        <title>Complete sequence of Mycobacterium sp. JLS.</title>
        <authorList>
            <consortium name="US DOE Joint Genome Institute"/>
            <person name="Copeland A."/>
            <person name="Lucas S."/>
            <person name="Lapidus A."/>
            <person name="Barry K."/>
            <person name="Detter J.C."/>
            <person name="Glavina del Rio T."/>
            <person name="Hammon N."/>
            <person name="Israni S."/>
            <person name="Dalin E."/>
            <person name="Tice H."/>
            <person name="Pitluck S."/>
            <person name="Chain P."/>
            <person name="Malfatti S."/>
            <person name="Shin M."/>
            <person name="Vergez L."/>
            <person name="Schmutz J."/>
            <person name="Larimer F."/>
            <person name="Land M."/>
            <person name="Hauser L."/>
            <person name="Kyrpides N."/>
            <person name="Mikhailova N."/>
            <person name="Miller C.D."/>
            <person name="Anderson A.J."/>
            <person name="Sims R.C."/>
            <person name="Richardson P."/>
        </authorList>
    </citation>
    <scope>NUCLEOTIDE SEQUENCE [LARGE SCALE GENOMIC DNA]</scope>
    <source>
        <strain>JLS</strain>
    </source>
</reference>